<accession>B8ZPX5</accession>
<proteinExistence type="inferred from homology"/>
<gene>
    <name evidence="1" type="primary">rpmF</name>
    <name type="ordered locus">SPN23F21660</name>
</gene>
<dbReference type="EMBL" id="FM211187">
    <property type="protein sequence ID" value="CAR69901.1"/>
    <property type="molecule type" value="Genomic_DNA"/>
</dbReference>
<dbReference type="RefSeq" id="WP_000290417.1">
    <property type="nucleotide sequence ID" value="NC_011900.1"/>
</dbReference>
<dbReference type="SMR" id="B8ZPX5"/>
<dbReference type="GeneID" id="49598937"/>
<dbReference type="KEGG" id="sne:SPN23F21660"/>
<dbReference type="HOGENOM" id="CLU_129084_2_3_9"/>
<dbReference type="GO" id="GO:0015934">
    <property type="term" value="C:large ribosomal subunit"/>
    <property type="evidence" value="ECO:0007669"/>
    <property type="project" value="InterPro"/>
</dbReference>
<dbReference type="GO" id="GO:0003735">
    <property type="term" value="F:structural constituent of ribosome"/>
    <property type="evidence" value="ECO:0007669"/>
    <property type="project" value="InterPro"/>
</dbReference>
<dbReference type="GO" id="GO:0006412">
    <property type="term" value="P:translation"/>
    <property type="evidence" value="ECO:0007669"/>
    <property type="project" value="UniProtKB-UniRule"/>
</dbReference>
<dbReference type="HAMAP" id="MF_00340">
    <property type="entry name" value="Ribosomal_bL32"/>
    <property type="match status" value="1"/>
</dbReference>
<dbReference type="InterPro" id="IPR002677">
    <property type="entry name" value="Ribosomal_bL32"/>
</dbReference>
<dbReference type="InterPro" id="IPR044957">
    <property type="entry name" value="Ribosomal_bL32_bact"/>
</dbReference>
<dbReference type="InterPro" id="IPR011332">
    <property type="entry name" value="Ribosomal_zn-bd"/>
</dbReference>
<dbReference type="NCBIfam" id="TIGR01031">
    <property type="entry name" value="rpmF_bact"/>
    <property type="match status" value="1"/>
</dbReference>
<dbReference type="PANTHER" id="PTHR35534">
    <property type="entry name" value="50S RIBOSOMAL PROTEIN L32"/>
    <property type="match status" value="1"/>
</dbReference>
<dbReference type="PANTHER" id="PTHR35534:SF1">
    <property type="entry name" value="LARGE RIBOSOMAL SUBUNIT PROTEIN BL32"/>
    <property type="match status" value="1"/>
</dbReference>
<dbReference type="Pfam" id="PF01783">
    <property type="entry name" value="Ribosomal_L32p"/>
    <property type="match status" value="1"/>
</dbReference>
<dbReference type="SUPFAM" id="SSF57829">
    <property type="entry name" value="Zn-binding ribosomal proteins"/>
    <property type="match status" value="1"/>
</dbReference>
<reference key="1">
    <citation type="journal article" date="2009" name="J. Bacteriol.">
        <title>Role of conjugative elements in the evolution of the multidrug-resistant pandemic clone Streptococcus pneumoniae Spain23F ST81.</title>
        <authorList>
            <person name="Croucher N.J."/>
            <person name="Walker D."/>
            <person name="Romero P."/>
            <person name="Lennard N."/>
            <person name="Paterson G.K."/>
            <person name="Bason N.C."/>
            <person name="Mitchell A.M."/>
            <person name="Quail M.A."/>
            <person name="Andrew P.W."/>
            <person name="Parkhill J."/>
            <person name="Bentley S.D."/>
            <person name="Mitchell T.J."/>
        </authorList>
    </citation>
    <scope>NUCLEOTIDE SEQUENCE [LARGE SCALE GENOMIC DNA]</scope>
    <source>
        <strain>ATCC 700669 / Spain 23F-1</strain>
    </source>
</reference>
<evidence type="ECO:0000255" key="1">
    <source>
        <dbReference type="HAMAP-Rule" id="MF_00340"/>
    </source>
</evidence>
<evidence type="ECO:0000305" key="2"/>
<organism>
    <name type="scientific">Streptococcus pneumoniae (strain ATCC 700669 / Spain 23F-1)</name>
    <dbReference type="NCBI Taxonomy" id="561276"/>
    <lineage>
        <taxon>Bacteria</taxon>
        <taxon>Bacillati</taxon>
        <taxon>Bacillota</taxon>
        <taxon>Bacilli</taxon>
        <taxon>Lactobacillales</taxon>
        <taxon>Streptococcaceae</taxon>
        <taxon>Streptococcus</taxon>
    </lineage>
</organism>
<protein>
    <recommendedName>
        <fullName evidence="1">Large ribosomal subunit protein bL32</fullName>
    </recommendedName>
    <alternativeName>
        <fullName evidence="2">50S ribosomal protein L32</fullName>
    </alternativeName>
</protein>
<feature type="chain" id="PRO_1000195996" description="Large ribosomal subunit protein bL32">
    <location>
        <begin position="1"/>
        <end position="60"/>
    </location>
</feature>
<sequence length="60" mass="6772">MAVPARRTSKAKKNKRRTHYKVTAPSVNFDETTGDYSRSHRVSLKGYYKGRKIAKAASAE</sequence>
<name>RL32_STRPJ</name>
<keyword id="KW-0687">Ribonucleoprotein</keyword>
<keyword id="KW-0689">Ribosomal protein</keyword>
<comment type="similarity">
    <text evidence="1">Belongs to the bacterial ribosomal protein bL32 family.</text>
</comment>